<geneLocation type="chloroplast"/>
<gene>
    <name evidence="1" type="primary">cemA</name>
    <name type="synonym">ycf10</name>
</gene>
<organism>
    <name type="scientific">Lepidium virginicum</name>
    <name type="common">Virginia pepperweed</name>
    <dbReference type="NCBI Taxonomy" id="59292"/>
    <lineage>
        <taxon>Eukaryota</taxon>
        <taxon>Viridiplantae</taxon>
        <taxon>Streptophyta</taxon>
        <taxon>Embryophyta</taxon>
        <taxon>Tracheophyta</taxon>
        <taxon>Spermatophyta</taxon>
        <taxon>Magnoliopsida</taxon>
        <taxon>eudicotyledons</taxon>
        <taxon>Gunneridae</taxon>
        <taxon>Pentapetalae</taxon>
        <taxon>rosids</taxon>
        <taxon>malvids</taxon>
        <taxon>Brassicales</taxon>
        <taxon>Brassicaceae</taxon>
        <taxon>Lepidieae</taxon>
        <taxon>Lepidium</taxon>
    </lineage>
</organism>
<proteinExistence type="inferred from homology"/>
<feature type="chain" id="PRO_0000293519" description="Potassium/proton antiporter CemA">
    <location>
        <begin position="1"/>
        <end position="229"/>
    </location>
</feature>
<feature type="transmembrane region" description="Helical" evidence="1">
    <location>
        <begin position="6"/>
        <end position="26"/>
    </location>
</feature>
<feature type="transmembrane region" description="Helical" evidence="1">
    <location>
        <begin position="107"/>
        <end position="127"/>
    </location>
</feature>
<feature type="transmembrane region" description="Helical" evidence="1">
    <location>
        <begin position="189"/>
        <end position="209"/>
    </location>
</feature>
<protein>
    <recommendedName>
        <fullName evidence="1">Potassium/proton antiporter CemA</fullName>
    </recommendedName>
    <alternativeName>
        <fullName evidence="1">Chloroplast envelope membrane protein A</fullName>
        <shortName evidence="1">CemA</shortName>
    </alternativeName>
</protein>
<name>CEMA_LEPVR</name>
<sequence>MAKKKAFIPFFDFTSIVFLPWLISLCCNKSLKTWITNWWNTRQCETFLNDIQEKSILEKFIQLEELFQLDEMIKEYPETDLQQFRLGIHKETIQFIKIHNEYRIHTILHFSTNLISFVILSGYSFWGKEKLFILNSWVQEFLYNLSDTIKAFSILLLTDLCIGFHSPHGWELMIGYIYKDFGFAHYEQILSGLVSTFPVILDTIFKYWIFRYLNRVSPSLVVIYHAIND</sequence>
<evidence type="ECO:0000255" key="1">
    <source>
        <dbReference type="HAMAP-Rule" id="MF_01308"/>
    </source>
</evidence>
<evidence type="ECO:0000305" key="2"/>
<comment type="function">
    <text evidence="1">Contributes to K(+)/H(+) antiport activity by supporting proton efflux to control proton extrusion and homeostasis in chloroplasts in a light-dependent manner to modulate photosynthesis. Prevents excessive induction of non-photochemical quenching (NPQ) under continuous-light conditions. Indirectly promotes efficient inorganic carbon uptake into chloroplasts.</text>
</comment>
<comment type="catalytic activity">
    <reaction evidence="1">
        <text>K(+)(in) + H(+)(out) = K(+)(out) + H(+)(in)</text>
        <dbReference type="Rhea" id="RHEA:29467"/>
        <dbReference type="ChEBI" id="CHEBI:15378"/>
        <dbReference type="ChEBI" id="CHEBI:29103"/>
    </reaction>
</comment>
<comment type="subcellular location">
    <subcellularLocation>
        <location evidence="1">Plastid</location>
        <location evidence="1">Chloroplast inner membrane</location>
        <topology evidence="1">Multi-pass membrane protein</topology>
    </subcellularLocation>
</comment>
<comment type="similarity">
    <text evidence="1 2">Belongs to the CemA family.</text>
</comment>
<accession>A4QLB8</accession>
<dbReference type="EMBL" id="AP009374">
    <property type="protein sequence ID" value="BAF50473.1"/>
    <property type="molecule type" value="Genomic_DNA"/>
</dbReference>
<dbReference type="RefSeq" id="YP_001123649.1">
    <property type="nucleotide sequence ID" value="NC_009273.1"/>
</dbReference>
<dbReference type="SMR" id="A4QLB8"/>
<dbReference type="GeneID" id="4962062"/>
<dbReference type="GO" id="GO:0009706">
    <property type="term" value="C:chloroplast inner membrane"/>
    <property type="evidence" value="ECO:0007669"/>
    <property type="project" value="UniProtKB-SubCell"/>
</dbReference>
<dbReference type="GO" id="GO:0015297">
    <property type="term" value="F:antiporter activity"/>
    <property type="evidence" value="ECO:0007669"/>
    <property type="project" value="UniProtKB-KW"/>
</dbReference>
<dbReference type="GO" id="GO:0015078">
    <property type="term" value="F:proton transmembrane transporter activity"/>
    <property type="evidence" value="ECO:0007669"/>
    <property type="project" value="UniProtKB-UniRule"/>
</dbReference>
<dbReference type="GO" id="GO:0006813">
    <property type="term" value="P:potassium ion transport"/>
    <property type="evidence" value="ECO:0007669"/>
    <property type="project" value="UniProtKB-UniRule"/>
</dbReference>
<dbReference type="HAMAP" id="MF_01308">
    <property type="entry name" value="CemA_PxcA"/>
    <property type="match status" value="1"/>
</dbReference>
<dbReference type="InterPro" id="IPR004282">
    <property type="entry name" value="CemA"/>
</dbReference>
<dbReference type="PANTHER" id="PTHR33650:SF2">
    <property type="entry name" value="CHLOROPLAST ENVELOPE MEMBRANE PROTEIN"/>
    <property type="match status" value="1"/>
</dbReference>
<dbReference type="PANTHER" id="PTHR33650">
    <property type="entry name" value="CHLOROPLAST ENVELOPE MEMBRANE PROTEIN-RELATED"/>
    <property type="match status" value="1"/>
</dbReference>
<dbReference type="Pfam" id="PF03040">
    <property type="entry name" value="CemA"/>
    <property type="match status" value="1"/>
</dbReference>
<keyword id="KW-0050">Antiport</keyword>
<keyword id="KW-0150">Chloroplast</keyword>
<keyword id="KW-0375">Hydrogen ion transport</keyword>
<keyword id="KW-0406">Ion transport</keyword>
<keyword id="KW-0472">Membrane</keyword>
<keyword id="KW-0934">Plastid</keyword>
<keyword id="KW-1001">Plastid inner membrane</keyword>
<keyword id="KW-0630">Potassium</keyword>
<keyword id="KW-0633">Potassium transport</keyword>
<keyword id="KW-0812">Transmembrane</keyword>
<keyword id="KW-1133">Transmembrane helix</keyword>
<keyword id="KW-0813">Transport</keyword>
<reference key="1">
    <citation type="submission" date="2007-03" db="EMBL/GenBank/DDBJ databases">
        <title>Sequencing analysis of Lepidium virginicum JO26 chloroplast DNA.</title>
        <authorList>
            <person name="Hosouchi T."/>
            <person name="Tsuruoka H."/>
            <person name="Kotani H."/>
        </authorList>
    </citation>
    <scope>NUCLEOTIDE SEQUENCE [LARGE SCALE GENOMIC DNA]</scope>
</reference>